<reference key="1">
    <citation type="journal article" date="2004" name="Nature">
        <title>Sequence and comparative analysis of the chicken genome provide unique perspectives on vertebrate evolution.</title>
        <authorList>
            <person name="Hillier L.W."/>
            <person name="Miller W."/>
            <person name="Birney E."/>
            <person name="Warren W."/>
            <person name="Hardison R.C."/>
            <person name="Ponting C.P."/>
            <person name="Bork P."/>
            <person name="Burt D.W."/>
            <person name="Groenen M.A.M."/>
            <person name="Delany M.E."/>
            <person name="Dodgson J.B."/>
            <person name="Chinwalla A.T."/>
            <person name="Cliften P.F."/>
            <person name="Clifton S.W."/>
            <person name="Delehaunty K.D."/>
            <person name="Fronick C."/>
            <person name="Fulton R.S."/>
            <person name="Graves T.A."/>
            <person name="Kremitzki C."/>
            <person name="Layman D."/>
            <person name="Magrini V."/>
            <person name="McPherson J.D."/>
            <person name="Miner T.L."/>
            <person name="Minx P."/>
            <person name="Nash W.E."/>
            <person name="Nhan M.N."/>
            <person name="Nelson J.O."/>
            <person name="Oddy L.G."/>
            <person name="Pohl C.S."/>
            <person name="Randall-Maher J."/>
            <person name="Smith S.M."/>
            <person name="Wallis J.W."/>
            <person name="Yang S.-P."/>
            <person name="Romanov M.N."/>
            <person name="Rondelli C.M."/>
            <person name="Paton B."/>
            <person name="Smith J."/>
            <person name="Morrice D."/>
            <person name="Daniels L."/>
            <person name="Tempest H.G."/>
            <person name="Robertson L."/>
            <person name="Masabanda J.S."/>
            <person name="Griffin D.K."/>
            <person name="Vignal A."/>
            <person name="Fillon V."/>
            <person name="Jacobbson L."/>
            <person name="Kerje S."/>
            <person name="Andersson L."/>
            <person name="Crooijmans R.P."/>
            <person name="Aerts J."/>
            <person name="van der Poel J.J."/>
            <person name="Ellegren H."/>
            <person name="Caldwell R.B."/>
            <person name="Hubbard S.J."/>
            <person name="Grafham D.V."/>
            <person name="Kierzek A.M."/>
            <person name="McLaren S.R."/>
            <person name="Overton I.M."/>
            <person name="Arakawa H."/>
            <person name="Beattie K.J."/>
            <person name="Bezzubov Y."/>
            <person name="Boardman P.E."/>
            <person name="Bonfield J.K."/>
            <person name="Croning M.D.R."/>
            <person name="Davies R.M."/>
            <person name="Francis M.D."/>
            <person name="Humphray S.J."/>
            <person name="Scott C.E."/>
            <person name="Taylor R.G."/>
            <person name="Tickle C."/>
            <person name="Brown W.R.A."/>
            <person name="Rogers J."/>
            <person name="Buerstedde J.-M."/>
            <person name="Wilson S.A."/>
            <person name="Stubbs L."/>
            <person name="Ovcharenko I."/>
            <person name="Gordon L."/>
            <person name="Lucas S."/>
            <person name="Miller M.M."/>
            <person name="Inoko H."/>
            <person name="Shiina T."/>
            <person name="Kaufman J."/>
            <person name="Salomonsen J."/>
            <person name="Skjoedt K."/>
            <person name="Wong G.K.-S."/>
            <person name="Wang J."/>
            <person name="Liu B."/>
            <person name="Wang J."/>
            <person name="Yu J."/>
            <person name="Yang H."/>
            <person name="Nefedov M."/>
            <person name="Koriabine M."/>
            <person name="Dejong P.J."/>
            <person name="Goodstadt L."/>
            <person name="Webber C."/>
            <person name="Dickens N.J."/>
            <person name="Letunic I."/>
            <person name="Suyama M."/>
            <person name="Torrents D."/>
            <person name="von Mering C."/>
            <person name="Zdobnov E.M."/>
            <person name="Makova K."/>
            <person name="Nekrutenko A."/>
            <person name="Elnitski L."/>
            <person name="Eswara P."/>
            <person name="King D.C."/>
            <person name="Yang S.-P."/>
            <person name="Tyekucheva S."/>
            <person name="Radakrishnan A."/>
            <person name="Harris R.S."/>
            <person name="Chiaromonte F."/>
            <person name="Taylor J."/>
            <person name="He J."/>
            <person name="Rijnkels M."/>
            <person name="Griffiths-Jones S."/>
            <person name="Ureta-Vidal A."/>
            <person name="Hoffman M.M."/>
            <person name="Severin J."/>
            <person name="Searle S.M.J."/>
            <person name="Law A.S."/>
            <person name="Speed D."/>
            <person name="Waddington D."/>
            <person name="Cheng Z."/>
            <person name="Tuzun E."/>
            <person name="Eichler E."/>
            <person name="Bao Z."/>
            <person name="Flicek P."/>
            <person name="Shteynberg D.D."/>
            <person name="Brent M.R."/>
            <person name="Bye J.M."/>
            <person name="Huckle E.J."/>
            <person name="Chatterji S."/>
            <person name="Dewey C."/>
            <person name="Pachter L."/>
            <person name="Kouranov A."/>
            <person name="Mourelatos Z."/>
            <person name="Hatzigeorgiou A.G."/>
            <person name="Paterson A.H."/>
            <person name="Ivarie R."/>
            <person name="Brandstrom M."/>
            <person name="Axelsson E."/>
            <person name="Backstrom N."/>
            <person name="Berlin S."/>
            <person name="Webster M.T."/>
            <person name="Pourquie O."/>
            <person name="Reymond A."/>
            <person name="Ucla C."/>
            <person name="Antonarakis S.E."/>
            <person name="Long M."/>
            <person name="Emerson J.J."/>
            <person name="Betran E."/>
            <person name="Dupanloup I."/>
            <person name="Kaessmann H."/>
            <person name="Hinrichs A.S."/>
            <person name="Bejerano G."/>
            <person name="Furey T.S."/>
            <person name="Harte R.A."/>
            <person name="Raney B."/>
            <person name="Siepel A."/>
            <person name="Kent W.J."/>
            <person name="Haussler D."/>
            <person name="Eyras E."/>
            <person name="Castelo R."/>
            <person name="Abril J.F."/>
            <person name="Castellano S."/>
            <person name="Camara F."/>
            <person name="Parra G."/>
            <person name="Guigo R."/>
            <person name="Bourque G."/>
            <person name="Tesler G."/>
            <person name="Pevzner P.A."/>
            <person name="Smit A."/>
            <person name="Fulton L.A."/>
            <person name="Mardis E.R."/>
            <person name="Wilson R.K."/>
        </authorList>
    </citation>
    <scope>NUCLEOTIDE SEQUENCE [LARGE SCALE GENOMIC DNA]</scope>
    <source>
        <strain>Red jungle fowl</strain>
    </source>
</reference>
<comment type="function">
    <text evidence="1">Regulator of protein phosphatase 1 (PP1) required for neural tube and optic fissure closure, and enteric neural crest cell (ENCCs) migration during development. Acts as an activator of PP1. During neural tube closure, localizes to the ventral neural tube and activates PP1, leading to down-regulate cell proliferation within cranial neural tissue and the neural retina. Also acts as a regulator of migration of enteric neural crest cells (ENCCs) by activating PP1, leading to repression of the integrin signaling through the RHO/ROCK pathway (By similarity).</text>
</comment>
<comment type="subunit">
    <text evidence="1">Binds PPP1CA and actin.</text>
</comment>
<comment type="subcellular location">
    <subcellularLocation>
        <location evidence="1">Cytoplasm</location>
    </subcellularLocation>
    <subcellularLocation>
        <location evidence="1">Cell projection</location>
        <location evidence="1">Lamellipodium</location>
    </subcellularLocation>
</comment>
<comment type="similarity">
    <text evidence="3">Belongs to the phosphatase and actin regulator family.</text>
</comment>
<dbReference type="EMBL" id="AADN02043997">
    <property type="status" value="NOT_ANNOTATED_CDS"/>
    <property type="molecule type" value="Genomic_DNA"/>
</dbReference>
<dbReference type="EMBL" id="AADN02043998">
    <property type="status" value="NOT_ANNOTATED_CDS"/>
    <property type="molecule type" value="Genomic_DNA"/>
</dbReference>
<dbReference type="EMBL" id="AADN02043999">
    <property type="status" value="NOT_ANNOTATED_CDS"/>
    <property type="molecule type" value="Genomic_DNA"/>
</dbReference>
<dbReference type="FunCoup" id="F1N8V3">
    <property type="interactions" value="1297"/>
</dbReference>
<dbReference type="STRING" id="9031.ENSGALP00000048872"/>
<dbReference type="GlyGen" id="F1N8V3">
    <property type="glycosylation" value="1 site"/>
</dbReference>
<dbReference type="VEuPathDB" id="HostDB:geneid_425087"/>
<dbReference type="eggNOG" id="KOG4339">
    <property type="taxonomic scope" value="Eukaryota"/>
</dbReference>
<dbReference type="InParanoid" id="F1N8V3"/>
<dbReference type="OrthoDB" id="5563016at2759"/>
<dbReference type="Proteomes" id="UP000000539">
    <property type="component" value="Unassembled WGS sequence"/>
</dbReference>
<dbReference type="GO" id="GO:0005737">
    <property type="term" value="C:cytoplasm"/>
    <property type="evidence" value="ECO:0007669"/>
    <property type="project" value="UniProtKB-SubCell"/>
</dbReference>
<dbReference type="GO" id="GO:0030027">
    <property type="term" value="C:lamellipodium"/>
    <property type="evidence" value="ECO:0000250"/>
    <property type="project" value="UniProtKB"/>
</dbReference>
<dbReference type="GO" id="GO:0003779">
    <property type="term" value="F:actin binding"/>
    <property type="evidence" value="ECO:0000250"/>
    <property type="project" value="UniProtKB"/>
</dbReference>
<dbReference type="GO" id="GO:0008157">
    <property type="term" value="F:protein phosphatase 1 binding"/>
    <property type="evidence" value="ECO:0000250"/>
    <property type="project" value="UniProtKB"/>
</dbReference>
<dbReference type="GO" id="GO:0072542">
    <property type="term" value="F:protein phosphatase activator activity"/>
    <property type="evidence" value="ECO:0000250"/>
    <property type="project" value="UniProtKB"/>
</dbReference>
<dbReference type="GO" id="GO:0030036">
    <property type="term" value="P:actin cytoskeleton organization"/>
    <property type="evidence" value="ECO:0000250"/>
    <property type="project" value="UniProtKB"/>
</dbReference>
<dbReference type="GO" id="GO:0061386">
    <property type="term" value="P:closure of optic fissure"/>
    <property type="evidence" value="ECO:0000250"/>
    <property type="project" value="UniProtKB"/>
</dbReference>
<dbReference type="GO" id="GO:0048484">
    <property type="term" value="P:enteric nervous system development"/>
    <property type="evidence" value="ECO:0000250"/>
    <property type="project" value="UniProtKB"/>
</dbReference>
<dbReference type="GO" id="GO:2001045">
    <property type="term" value="P:negative regulation of integrin-mediated signaling pathway"/>
    <property type="evidence" value="ECO:0000250"/>
    <property type="project" value="UniProtKB"/>
</dbReference>
<dbReference type="GO" id="GO:0001755">
    <property type="term" value="P:neural crest cell migration"/>
    <property type="evidence" value="ECO:0000250"/>
    <property type="project" value="UniProtKB"/>
</dbReference>
<dbReference type="GO" id="GO:0001843">
    <property type="term" value="P:neural tube closure"/>
    <property type="evidence" value="ECO:0000250"/>
    <property type="project" value="UniProtKB"/>
</dbReference>
<dbReference type="GO" id="GO:0043085">
    <property type="term" value="P:positive regulation of catalytic activity"/>
    <property type="evidence" value="ECO:0000250"/>
    <property type="project" value="UniProtKB"/>
</dbReference>
<dbReference type="GO" id="GO:0051726">
    <property type="term" value="P:regulation of cell cycle"/>
    <property type="evidence" value="ECO:0000250"/>
    <property type="project" value="UniProtKB"/>
</dbReference>
<dbReference type="GO" id="GO:0007266">
    <property type="term" value="P:Rho protein signal transduction"/>
    <property type="evidence" value="ECO:0000250"/>
    <property type="project" value="UniProtKB"/>
</dbReference>
<dbReference type="Gene3D" id="6.10.140.1750">
    <property type="match status" value="1"/>
</dbReference>
<dbReference type="Gene3D" id="6.10.140.2130">
    <property type="match status" value="1"/>
</dbReference>
<dbReference type="InterPro" id="IPR004018">
    <property type="entry name" value="RPEL_repeat"/>
</dbReference>
<dbReference type="PANTHER" id="PTHR12751:SF4">
    <property type="entry name" value="PHOSPHATASE AND ACTIN REGULATOR 4"/>
    <property type="match status" value="1"/>
</dbReference>
<dbReference type="PANTHER" id="PTHR12751">
    <property type="entry name" value="PHOSPHATASE AND ACTIN REGULATOR PHACTR"/>
    <property type="match status" value="1"/>
</dbReference>
<dbReference type="Pfam" id="PF02755">
    <property type="entry name" value="RPEL"/>
    <property type="match status" value="3"/>
</dbReference>
<dbReference type="SMART" id="SM00707">
    <property type="entry name" value="RPEL"/>
    <property type="match status" value="3"/>
</dbReference>
<dbReference type="PROSITE" id="PS51073">
    <property type="entry name" value="RPEL"/>
    <property type="match status" value="3"/>
</dbReference>
<accession>F1N8V3</accession>
<organism>
    <name type="scientific">Gallus gallus</name>
    <name type="common">Chicken</name>
    <dbReference type="NCBI Taxonomy" id="9031"/>
    <lineage>
        <taxon>Eukaryota</taxon>
        <taxon>Metazoa</taxon>
        <taxon>Chordata</taxon>
        <taxon>Craniata</taxon>
        <taxon>Vertebrata</taxon>
        <taxon>Euteleostomi</taxon>
        <taxon>Archelosauria</taxon>
        <taxon>Archosauria</taxon>
        <taxon>Dinosauria</taxon>
        <taxon>Saurischia</taxon>
        <taxon>Theropoda</taxon>
        <taxon>Coelurosauria</taxon>
        <taxon>Aves</taxon>
        <taxon>Neognathae</taxon>
        <taxon>Galloanserae</taxon>
        <taxon>Galliformes</taxon>
        <taxon>Phasianidae</taxon>
        <taxon>Phasianinae</taxon>
        <taxon>Gallus</taxon>
    </lineage>
</organism>
<sequence length="720" mass="79686">MGQPRFSRPVHPAAAAEEVDHPPSDAGMGVDVLESGDTTPPTKRKSKFSGFGKIFKPWKWRKKKSSDKFKETSEVLERKISMRKPREELVKRGVLLEDPEQALSSDCPGKEGSVLRKSIILISHFRDAETPGQSEDDGGRLLYLQFQNLLLREGKEAAWPWHQAECIPVEQQVPPLGIKLTRGLFPSAGKSQGRAAEHPGLGLTSCVLLSTSILSAPANVSAGAFLVSFLSLVCNCSEALRAPGGEAVTLLTDTXEVTNQAQPPCQTAPCPPHPIPTNRNSSSVIAELSQAINSGTGLSKPSPPLPPKRGLLPTNPPEAALPSKPPGDRTVTASRPTLLPMHVAPTYPPPSPSPPLPTHIPPEPPRMPLPNSTPALDAPRSLDLPKETPPPSKDFRSLEVSKRTAEQGFGEPPGLPRLPQIPLHIRIQQALASPLPVTPPADGSHRAHSLLFENDGFGEDNGTLGRTRSLPVTIEMLKVPDDEEEEEEDQEEEQNSGPRVYIGDVPSITVIPMLVPQVLPEEQEGEEGMSDSDSEGPILYKDDEEDEEEDESHNSTLANKVKRKDTLAIKLGNTTTVQEEKIVFPRKSKEEWNEIRQQIGTTLIRRLSQRPTAEELEQRNILQPKNEADRQAEKREIKRRLTRKLSQRPTVAELQARKILRFNEYVEVTDAQDYDRRADKPWTKLTPADKAAIRKELNEFKSCEMEVHEESKQFTRYHRP</sequence>
<name>PHAR4_CHICK</name>
<gene>
    <name type="primary">PHACTR4</name>
</gene>
<feature type="chain" id="PRO_0000416889" description="Phosphatase and actin regulator 4">
    <location>
        <begin position="1"/>
        <end position="720"/>
    </location>
</feature>
<feature type="repeat" description="RPEL 1">
    <location>
        <begin position="74"/>
        <end position="99"/>
    </location>
</feature>
<feature type="repeat" description="RPEL 2">
    <location>
        <begin position="601"/>
        <end position="626"/>
    </location>
</feature>
<feature type="repeat" description="RPEL 3">
    <location>
        <begin position="639"/>
        <end position="664"/>
    </location>
</feature>
<feature type="region of interest" description="Disordered" evidence="2">
    <location>
        <begin position="1"/>
        <end position="48"/>
    </location>
</feature>
<feature type="region of interest" description="Disordered" evidence="2">
    <location>
        <begin position="294"/>
        <end position="417"/>
    </location>
</feature>
<feature type="region of interest" description="Disordered" evidence="2">
    <location>
        <begin position="454"/>
        <end position="568"/>
    </location>
</feature>
<feature type="region of interest" description="Disordered" evidence="2">
    <location>
        <begin position="610"/>
        <end position="648"/>
    </location>
</feature>
<feature type="compositionally biased region" description="Pro residues" evidence="2">
    <location>
        <begin position="346"/>
        <end position="368"/>
    </location>
</feature>
<feature type="compositionally biased region" description="Basic and acidic residues" evidence="2">
    <location>
        <begin position="393"/>
        <end position="405"/>
    </location>
</feature>
<feature type="compositionally biased region" description="Acidic residues" evidence="2">
    <location>
        <begin position="481"/>
        <end position="494"/>
    </location>
</feature>
<feature type="compositionally biased region" description="Acidic residues" evidence="2">
    <location>
        <begin position="521"/>
        <end position="534"/>
    </location>
</feature>
<feature type="compositionally biased region" description="Acidic residues" evidence="2">
    <location>
        <begin position="542"/>
        <end position="551"/>
    </location>
</feature>
<feature type="compositionally biased region" description="Basic and acidic residues" evidence="2">
    <location>
        <begin position="626"/>
        <end position="636"/>
    </location>
</feature>
<feature type="compositionally biased region" description="Basic residues" evidence="2">
    <location>
        <begin position="637"/>
        <end position="646"/>
    </location>
</feature>
<evidence type="ECO:0000250" key="1"/>
<evidence type="ECO:0000256" key="2">
    <source>
        <dbReference type="SAM" id="MobiDB-lite"/>
    </source>
</evidence>
<evidence type="ECO:0000305" key="3"/>
<proteinExistence type="inferred from homology"/>
<protein>
    <recommendedName>
        <fullName>Phosphatase and actin regulator 4</fullName>
    </recommendedName>
</protein>
<keyword id="KW-0009">Actin-binding</keyword>
<keyword id="KW-0966">Cell projection</keyword>
<keyword id="KW-0963">Cytoplasm</keyword>
<keyword id="KW-0217">Developmental protein</keyword>
<keyword id="KW-0524">Neurogenesis</keyword>
<keyword id="KW-1185">Reference proteome</keyword>
<keyword id="KW-0677">Repeat</keyword>